<reference key="1">
    <citation type="journal article" date="2003" name="J. Bacteriol.">
        <title>Complete genome sequence of the ammonia-oxidizing bacterium and obligate chemolithoautotroph Nitrosomonas europaea.</title>
        <authorList>
            <person name="Chain P."/>
            <person name="Lamerdin J.E."/>
            <person name="Larimer F.W."/>
            <person name="Regala W."/>
            <person name="Lao V."/>
            <person name="Land M.L."/>
            <person name="Hauser L."/>
            <person name="Hooper A.B."/>
            <person name="Klotz M.G."/>
            <person name="Norton J."/>
            <person name="Sayavedra-Soto L.A."/>
            <person name="Arciero D.M."/>
            <person name="Hommes N.G."/>
            <person name="Whittaker M.M."/>
            <person name="Arp D.J."/>
        </authorList>
    </citation>
    <scope>NUCLEOTIDE SEQUENCE [LARGE SCALE GENOMIC DNA]</scope>
    <source>
        <strain>ATCC 19718 / CIP 103999 / KCTC 2705 / NBRC 14298</strain>
    </source>
</reference>
<gene>
    <name evidence="1" type="primary">acsA</name>
    <name type="ordered locus">NE2341</name>
</gene>
<comment type="function">
    <text evidence="1">Catalyzes the conversion of acetate into acetyl-CoA (AcCoA), an essential intermediate at the junction of anabolic and catabolic pathways. AcsA undergoes a two-step reaction. In the first half reaction, AcsA combines acetate with ATP to form acetyl-adenylate (AcAMP) intermediate. In the second half reaction, it can then transfer the acetyl group from AcAMP to the sulfhydryl group of CoA, forming the product AcCoA.</text>
</comment>
<comment type="catalytic activity">
    <reaction evidence="1">
        <text>acetate + ATP + CoA = acetyl-CoA + AMP + diphosphate</text>
        <dbReference type="Rhea" id="RHEA:23176"/>
        <dbReference type="ChEBI" id="CHEBI:30089"/>
        <dbReference type="ChEBI" id="CHEBI:30616"/>
        <dbReference type="ChEBI" id="CHEBI:33019"/>
        <dbReference type="ChEBI" id="CHEBI:57287"/>
        <dbReference type="ChEBI" id="CHEBI:57288"/>
        <dbReference type="ChEBI" id="CHEBI:456215"/>
        <dbReference type="EC" id="6.2.1.1"/>
    </reaction>
</comment>
<comment type="cofactor">
    <cofactor evidence="1">
        <name>Mg(2+)</name>
        <dbReference type="ChEBI" id="CHEBI:18420"/>
    </cofactor>
</comment>
<comment type="PTM">
    <text evidence="1">Acetylated. Deacetylation by the SIR2-homolog deacetylase activates the enzyme.</text>
</comment>
<comment type="similarity">
    <text evidence="1">Belongs to the ATP-dependent AMP-binding enzyme family.</text>
</comment>
<name>ACSA_NITEU</name>
<feature type="chain" id="PRO_0000208370" description="Acetyl-coenzyme A synthetase">
    <location>
        <begin position="1"/>
        <end position="655"/>
    </location>
</feature>
<feature type="binding site" evidence="1">
    <location>
        <begin position="196"/>
        <end position="199"/>
    </location>
    <ligand>
        <name>CoA</name>
        <dbReference type="ChEBI" id="CHEBI:57287"/>
    </ligand>
</feature>
<feature type="binding site" evidence="1">
    <location>
        <position position="316"/>
    </location>
    <ligand>
        <name>CoA</name>
        <dbReference type="ChEBI" id="CHEBI:57287"/>
    </ligand>
</feature>
<feature type="binding site" evidence="1">
    <location>
        <begin position="392"/>
        <end position="394"/>
    </location>
    <ligand>
        <name>ATP</name>
        <dbReference type="ChEBI" id="CHEBI:30616"/>
    </ligand>
</feature>
<feature type="binding site" evidence="1">
    <location>
        <begin position="416"/>
        <end position="421"/>
    </location>
    <ligand>
        <name>ATP</name>
        <dbReference type="ChEBI" id="CHEBI:30616"/>
    </ligand>
</feature>
<feature type="binding site" evidence="1">
    <location>
        <position position="508"/>
    </location>
    <ligand>
        <name>ATP</name>
        <dbReference type="ChEBI" id="CHEBI:30616"/>
    </ligand>
</feature>
<feature type="binding site" evidence="1">
    <location>
        <position position="523"/>
    </location>
    <ligand>
        <name>ATP</name>
        <dbReference type="ChEBI" id="CHEBI:30616"/>
    </ligand>
</feature>
<feature type="binding site" evidence="1">
    <location>
        <position position="531"/>
    </location>
    <ligand>
        <name>CoA</name>
        <dbReference type="ChEBI" id="CHEBI:57287"/>
    </ligand>
</feature>
<feature type="binding site" evidence="1">
    <location>
        <position position="534"/>
    </location>
    <ligand>
        <name>ATP</name>
        <dbReference type="ChEBI" id="CHEBI:30616"/>
    </ligand>
</feature>
<feature type="binding site" evidence="1">
    <location>
        <position position="545"/>
    </location>
    <ligand>
        <name>Mg(2+)</name>
        <dbReference type="ChEBI" id="CHEBI:18420"/>
    </ligand>
</feature>
<feature type="binding site" evidence="1">
    <location>
        <position position="547"/>
    </location>
    <ligand>
        <name>Mg(2+)</name>
        <dbReference type="ChEBI" id="CHEBI:18420"/>
    </ligand>
</feature>
<feature type="binding site" evidence="1">
    <location>
        <position position="550"/>
    </location>
    <ligand>
        <name>Mg(2+)</name>
        <dbReference type="ChEBI" id="CHEBI:18420"/>
    </ligand>
</feature>
<feature type="modified residue" description="N6-acetyllysine" evidence="1">
    <location>
        <position position="620"/>
    </location>
</feature>
<protein>
    <recommendedName>
        <fullName evidence="1">Acetyl-coenzyme A synthetase</fullName>
        <shortName evidence="1">AcCoA synthetase</shortName>
        <shortName evidence="1">Acs</shortName>
        <ecNumber evidence="1">6.2.1.1</ecNumber>
    </recommendedName>
    <alternativeName>
        <fullName evidence="1">Acetate--CoA ligase</fullName>
    </alternativeName>
    <alternativeName>
        <fullName evidence="1">Acyl-activating enzyme</fullName>
    </alternativeName>
</protein>
<keyword id="KW-0007">Acetylation</keyword>
<keyword id="KW-0067">ATP-binding</keyword>
<keyword id="KW-0436">Ligase</keyword>
<keyword id="KW-0460">Magnesium</keyword>
<keyword id="KW-0479">Metal-binding</keyword>
<keyword id="KW-0547">Nucleotide-binding</keyword>
<keyword id="KW-1185">Reference proteome</keyword>
<sequence length="655" mass="72839">MATIESILHENRIFPPASEFVRNANLSGREAYETLRQEAEHDYTGFWAKLAQQYIAWHKPFTRVLNDANPPFYKWFDDGELNISWNCLDRHLATQADKTAIIFESDAGEVNHCSYRELHRQVCHFANGLKSLGIRQGDRVVIYMPMRIEAVVAMQACARIGAIHSVVFGGFSAKSVYERIIDAGASAVITADEQIRGGRYHPLKATVDEALAMGDTATVHSVIVFRHTGTGITWQPERDHWWHDLIAGQPDECEPAWINAEHPLFTLYTSGSTGKPKGVQHSSAGYLLGAVTSMQWVFDYHADDVFWCTADVGWVTGHSYVAYGPLAIGATQVIFEGTPTHPHAGRFWEIIQKHRITTFYTAPTAIRSLIKLGSDLPAKYDLSSLRLLGSVGEPINPEAWMWYYTVVGQSRCPVVDTWWQTETGCHMIAPAPGAISTKPGSCTLPLPGIDAAVVDETGHPVEQGKGGFLVIKRPFPSMLRTLWNDPERFRKTYFPTDIAGGRYYLAGDSAHRDQDGYFWIMGRVDDVLNVSGHRLGTMEIESALVAHPLVAEAAVVGKPHEIKGEVVVAFVTLREKLPDDQRAAEIAATLREWVASEIGAIARPEEIRFGENLPKTRSGKIMRRLLRALARGETITQDVSTLENPVILEQLSQTV</sequence>
<accession>Q82SI5</accession>
<dbReference type="EC" id="6.2.1.1" evidence="1"/>
<dbReference type="EMBL" id="AL954747">
    <property type="protein sequence ID" value="CAD86253.1"/>
    <property type="molecule type" value="Genomic_DNA"/>
</dbReference>
<dbReference type="SMR" id="Q82SI5"/>
<dbReference type="STRING" id="228410.NE2341"/>
<dbReference type="GeneID" id="87105473"/>
<dbReference type="KEGG" id="neu:NE2341"/>
<dbReference type="eggNOG" id="COG0365">
    <property type="taxonomic scope" value="Bacteria"/>
</dbReference>
<dbReference type="HOGENOM" id="CLU_000022_3_6_4"/>
<dbReference type="OrthoDB" id="9766486at2"/>
<dbReference type="PhylomeDB" id="Q82SI5"/>
<dbReference type="Proteomes" id="UP000001416">
    <property type="component" value="Chromosome"/>
</dbReference>
<dbReference type="GO" id="GO:0005829">
    <property type="term" value="C:cytosol"/>
    <property type="evidence" value="ECO:0007669"/>
    <property type="project" value="TreeGrafter"/>
</dbReference>
<dbReference type="GO" id="GO:0003987">
    <property type="term" value="F:acetate-CoA ligase activity"/>
    <property type="evidence" value="ECO:0007669"/>
    <property type="project" value="UniProtKB-UniRule"/>
</dbReference>
<dbReference type="GO" id="GO:0016208">
    <property type="term" value="F:AMP binding"/>
    <property type="evidence" value="ECO:0007669"/>
    <property type="project" value="InterPro"/>
</dbReference>
<dbReference type="GO" id="GO:0005524">
    <property type="term" value="F:ATP binding"/>
    <property type="evidence" value="ECO:0007669"/>
    <property type="project" value="UniProtKB-KW"/>
</dbReference>
<dbReference type="GO" id="GO:0046872">
    <property type="term" value="F:metal ion binding"/>
    <property type="evidence" value="ECO:0007669"/>
    <property type="project" value="UniProtKB-KW"/>
</dbReference>
<dbReference type="GO" id="GO:0019427">
    <property type="term" value="P:acetyl-CoA biosynthetic process from acetate"/>
    <property type="evidence" value="ECO:0007669"/>
    <property type="project" value="InterPro"/>
</dbReference>
<dbReference type="CDD" id="cd05966">
    <property type="entry name" value="ACS"/>
    <property type="match status" value="1"/>
</dbReference>
<dbReference type="FunFam" id="3.40.50.12780:FF:000001">
    <property type="entry name" value="Acetyl-coenzyme A synthetase"/>
    <property type="match status" value="1"/>
</dbReference>
<dbReference type="Gene3D" id="3.30.300.30">
    <property type="match status" value="1"/>
</dbReference>
<dbReference type="Gene3D" id="3.40.50.12780">
    <property type="entry name" value="N-terminal domain of ligase-like"/>
    <property type="match status" value="1"/>
</dbReference>
<dbReference type="HAMAP" id="MF_01123">
    <property type="entry name" value="Ac_CoA_synth"/>
    <property type="match status" value="1"/>
</dbReference>
<dbReference type="InterPro" id="IPR011904">
    <property type="entry name" value="Ac_CoA_lig"/>
</dbReference>
<dbReference type="InterPro" id="IPR032387">
    <property type="entry name" value="ACAS_N"/>
</dbReference>
<dbReference type="InterPro" id="IPR025110">
    <property type="entry name" value="AMP-bd_C"/>
</dbReference>
<dbReference type="InterPro" id="IPR045851">
    <property type="entry name" value="AMP-bd_C_sf"/>
</dbReference>
<dbReference type="InterPro" id="IPR000873">
    <property type="entry name" value="AMP-dep_synth/lig_dom"/>
</dbReference>
<dbReference type="InterPro" id="IPR042099">
    <property type="entry name" value="ANL_N_sf"/>
</dbReference>
<dbReference type="NCBIfam" id="TIGR02188">
    <property type="entry name" value="Ac_CoA_lig_AcsA"/>
    <property type="match status" value="1"/>
</dbReference>
<dbReference type="NCBIfam" id="NF001208">
    <property type="entry name" value="PRK00174.1"/>
    <property type="match status" value="1"/>
</dbReference>
<dbReference type="PANTHER" id="PTHR24095">
    <property type="entry name" value="ACETYL-COENZYME A SYNTHETASE"/>
    <property type="match status" value="1"/>
</dbReference>
<dbReference type="PANTHER" id="PTHR24095:SF14">
    <property type="entry name" value="ACETYL-COENZYME A SYNTHETASE 1"/>
    <property type="match status" value="1"/>
</dbReference>
<dbReference type="Pfam" id="PF16177">
    <property type="entry name" value="ACAS_N"/>
    <property type="match status" value="1"/>
</dbReference>
<dbReference type="Pfam" id="PF00501">
    <property type="entry name" value="AMP-binding"/>
    <property type="match status" value="1"/>
</dbReference>
<dbReference type="Pfam" id="PF13193">
    <property type="entry name" value="AMP-binding_C"/>
    <property type="match status" value="1"/>
</dbReference>
<dbReference type="SUPFAM" id="SSF56801">
    <property type="entry name" value="Acetyl-CoA synthetase-like"/>
    <property type="match status" value="1"/>
</dbReference>
<proteinExistence type="inferred from homology"/>
<evidence type="ECO:0000255" key="1">
    <source>
        <dbReference type="HAMAP-Rule" id="MF_01123"/>
    </source>
</evidence>
<organism>
    <name type="scientific">Nitrosomonas europaea (strain ATCC 19718 / CIP 103999 / KCTC 2705 / NBRC 14298)</name>
    <dbReference type="NCBI Taxonomy" id="228410"/>
    <lineage>
        <taxon>Bacteria</taxon>
        <taxon>Pseudomonadati</taxon>
        <taxon>Pseudomonadota</taxon>
        <taxon>Betaproteobacteria</taxon>
        <taxon>Nitrosomonadales</taxon>
        <taxon>Nitrosomonadaceae</taxon>
        <taxon>Nitrosomonas</taxon>
    </lineage>
</organism>